<accession>Q0C3U4</accession>
<sequence length="116" mass="13036">MARVTVEDCIQKVPNRFELVLLAAHRARMIREGSPLTIDRDNDKDPVVSLREIAETSIDLKVVKEALISNLQDIRPGEENEREADRVALQAAPAATEDDVLRAYQAELESGRDDRL</sequence>
<protein>
    <recommendedName>
        <fullName evidence="1">DNA-directed RNA polymerase subunit omega</fullName>
        <shortName evidence="1">RNAP omega subunit</shortName>
        <ecNumber evidence="1">2.7.7.6</ecNumber>
    </recommendedName>
    <alternativeName>
        <fullName evidence="1">RNA polymerase omega subunit</fullName>
    </alternativeName>
    <alternativeName>
        <fullName evidence="1">Transcriptase subunit omega</fullName>
    </alternativeName>
</protein>
<comment type="function">
    <text evidence="1">Promotes RNA polymerase assembly. Latches the N- and C-terminal regions of the beta' subunit thereby facilitating its interaction with the beta and alpha subunits.</text>
</comment>
<comment type="catalytic activity">
    <reaction evidence="1">
        <text>RNA(n) + a ribonucleoside 5'-triphosphate = RNA(n+1) + diphosphate</text>
        <dbReference type="Rhea" id="RHEA:21248"/>
        <dbReference type="Rhea" id="RHEA-COMP:14527"/>
        <dbReference type="Rhea" id="RHEA-COMP:17342"/>
        <dbReference type="ChEBI" id="CHEBI:33019"/>
        <dbReference type="ChEBI" id="CHEBI:61557"/>
        <dbReference type="ChEBI" id="CHEBI:140395"/>
        <dbReference type="EC" id="2.7.7.6"/>
    </reaction>
</comment>
<comment type="subunit">
    <text evidence="1">The RNAP catalytic core consists of 2 alpha, 1 beta, 1 beta' and 1 omega subunit. When a sigma factor is associated with the core the holoenzyme is formed, which can initiate transcription.</text>
</comment>
<comment type="similarity">
    <text evidence="1">Belongs to the RNA polymerase subunit omega family.</text>
</comment>
<name>RPOZ_HYPNA</name>
<feature type="chain" id="PRO_1000005941" description="DNA-directed RNA polymerase subunit omega">
    <location>
        <begin position="1"/>
        <end position="116"/>
    </location>
</feature>
<organism>
    <name type="scientific">Hyphomonas neptunium (strain ATCC 15444)</name>
    <dbReference type="NCBI Taxonomy" id="228405"/>
    <lineage>
        <taxon>Bacteria</taxon>
        <taxon>Pseudomonadati</taxon>
        <taxon>Pseudomonadota</taxon>
        <taxon>Alphaproteobacteria</taxon>
        <taxon>Hyphomonadales</taxon>
        <taxon>Hyphomonadaceae</taxon>
        <taxon>Hyphomonas</taxon>
    </lineage>
</organism>
<gene>
    <name evidence="1" type="primary">rpoZ</name>
    <name type="ordered locus">HNE_0872</name>
</gene>
<reference key="1">
    <citation type="journal article" date="2006" name="J. Bacteriol.">
        <title>Comparative genomic evidence for a close relationship between the dimorphic prosthecate bacteria Hyphomonas neptunium and Caulobacter crescentus.</title>
        <authorList>
            <person name="Badger J.H."/>
            <person name="Hoover T.R."/>
            <person name="Brun Y.V."/>
            <person name="Weiner R.M."/>
            <person name="Laub M.T."/>
            <person name="Alexandre G."/>
            <person name="Mrazek J."/>
            <person name="Ren Q."/>
            <person name="Paulsen I.T."/>
            <person name="Nelson K.E."/>
            <person name="Khouri H.M."/>
            <person name="Radune D."/>
            <person name="Sosa J."/>
            <person name="Dodson R.J."/>
            <person name="Sullivan S.A."/>
            <person name="Rosovitz M.J."/>
            <person name="Madupu R."/>
            <person name="Brinkac L.M."/>
            <person name="Durkin A.S."/>
            <person name="Daugherty S.C."/>
            <person name="Kothari S.P."/>
            <person name="Giglio M.G."/>
            <person name="Zhou L."/>
            <person name="Haft D.H."/>
            <person name="Selengut J.D."/>
            <person name="Davidsen T.M."/>
            <person name="Yang Q."/>
            <person name="Zafar N."/>
            <person name="Ward N.L."/>
        </authorList>
    </citation>
    <scope>NUCLEOTIDE SEQUENCE [LARGE SCALE GENOMIC DNA]</scope>
    <source>
        <strain>ATCC 15444</strain>
    </source>
</reference>
<dbReference type="EC" id="2.7.7.6" evidence="1"/>
<dbReference type="EMBL" id="CP000158">
    <property type="protein sequence ID" value="ABI77886.1"/>
    <property type="molecule type" value="Genomic_DNA"/>
</dbReference>
<dbReference type="RefSeq" id="WP_011645899.1">
    <property type="nucleotide sequence ID" value="NC_008358.1"/>
</dbReference>
<dbReference type="SMR" id="Q0C3U4"/>
<dbReference type="STRING" id="228405.HNE_0872"/>
<dbReference type="KEGG" id="hne:HNE_0872"/>
<dbReference type="eggNOG" id="COG1758">
    <property type="taxonomic scope" value="Bacteria"/>
</dbReference>
<dbReference type="HOGENOM" id="CLU_125406_2_0_5"/>
<dbReference type="Proteomes" id="UP000001959">
    <property type="component" value="Chromosome"/>
</dbReference>
<dbReference type="GO" id="GO:0000428">
    <property type="term" value="C:DNA-directed RNA polymerase complex"/>
    <property type="evidence" value="ECO:0007669"/>
    <property type="project" value="UniProtKB-KW"/>
</dbReference>
<dbReference type="GO" id="GO:0003677">
    <property type="term" value="F:DNA binding"/>
    <property type="evidence" value="ECO:0007669"/>
    <property type="project" value="UniProtKB-UniRule"/>
</dbReference>
<dbReference type="GO" id="GO:0003899">
    <property type="term" value="F:DNA-directed RNA polymerase activity"/>
    <property type="evidence" value="ECO:0007669"/>
    <property type="project" value="UniProtKB-UniRule"/>
</dbReference>
<dbReference type="GO" id="GO:0006351">
    <property type="term" value="P:DNA-templated transcription"/>
    <property type="evidence" value="ECO:0007669"/>
    <property type="project" value="UniProtKB-UniRule"/>
</dbReference>
<dbReference type="Gene3D" id="3.90.940.10">
    <property type="match status" value="1"/>
</dbReference>
<dbReference type="HAMAP" id="MF_00366">
    <property type="entry name" value="RNApol_bact_RpoZ"/>
    <property type="match status" value="1"/>
</dbReference>
<dbReference type="InterPro" id="IPR003716">
    <property type="entry name" value="DNA-dir_RNA_pol_omega"/>
</dbReference>
<dbReference type="InterPro" id="IPR006110">
    <property type="entry name" value="Pol_omega/Rpo6/RPB6"/>
</dbReference>
<dbReference type="InterPro" id="IPR036161">
    <property type="entry name" value="RPB6/omega-like_sf"/>
</dbReference>
<dbReference type="NCBIfam" id="TIGR00690">
    <property type="entry name" value="rpoZ"/>
    <property type="match status" value="1"/>
</dbReference>
<dbReference type="PANTHER" id="PTHR34476">
    <property type="entry name" value="DNA-DIRECTED RNA POLYMERASE SUBUNIT OMEGA"/>
    <property type="match status" value="1"/>
</dbReference>
<dbReference type="PANTHER" id="PTHR34476:SF1">
    <property type="entry name" value="DNA-DIRECTED RNA POLYMERASE SUBUNIT OMEGA"/>
    <property type="match status" value="1"/>
</dbReference>
<dbReference type="Pfam" id="PF01192">
    <property type="entry name" value="RNA_pol_Rpb6"/>
    <property type="match status" value="1"/>
</dbReference>
<dbReference type="SMART" id="SM01409">
    <property type="entry name" value="RNA_pol_Rpb6"/>
    <property type="match status" value="1"/>
</dbReference>
<dbReference type="SUPFAM" id="SSF63562">
    <property type="entry name" value="RPB6/omega subunit-like"/>
    <property type="match status" value="1"/>
</dbReference>
<evidence type="ECO:0000255" key="1">
    <source>
        <dbReference type="HAMAP-Rule" id="MF_00366"/>
    </source>
</evidence>
<proteinExistence type="inferred from homology"/>
<keyword id="KW-0240">DNA-directed RNA polymerase</keyword>
<keyword id="KW-0548">Nucleotidyltransferase</keyword>
<keyword id="KW-1185">Reference proteome</keyword>
<keyword id="KW-0804">Transcription</keyword>
<keyword id="KW-0808">Transferase</keyword>